<evidence type="ECO:0000255" key="1">
    <source>
        <dbReference type="HAMAP-Rule" id="MF_00270"/>
    </source>
</evidence>
<evidence type="ECO:0000256" key="2">
    <source>
        <dbReference type="SAM" id="MobiDB-lite"/>
    </source>
</evidence>
<evidence type="ECO:0000305" key="3"/>
<accession>Q11H15</accession>
<reference key="1">
    <citation type="submission" date="2006-06" db="EMBL/GenBank/DDBJ databases">
        <title>Complete sequence of chromosome of Mesorhizobium sp. BNC1.</title>
        <authorList>
            <consortium name="US DOE Joint Genome Institute"/>
            <person name="Copeland A."/>
            <person name="Lucas S."/>
            <person name="Lapidus A."/>
            <person name="Barry K."/>
            <person name="Detter J.C."/>
            <person name="Glavina del Rio T."/>
            <person name="Hammon N."/>
            <person name="Israni S."/>
            <person name="Dalin E."/>
            <person name="Tice H."/>
            <person name="Pitluck S."/>
            <person name="Chertkov O."/>
            <person name="Brettin T."/>
            <person name="Bruce D."/>
            <person name="Han C."/>
            <person name="Tapia R."/>
            <person name="Gilna P."/>
            <person name="Schmutz J."/>
            <person name="Larimer F."/>
            <person name="Land M."/>
            <person name="Hauser L."/>
            <person name="Kyrpides N."/>
            <person name="Mikhailova N."/>
            <person name="Richardson P."/>
        </authorList>
    </citation>
    <scope>NUCLEOTIDE SEQUENCE [LARGE SCALE GENOMIC DNA]</scope>
    <source>
        <strain>BNC1</strain>
    </source>
</reference>
<comment type="function">
    <text evidence="1">Binds as a heterodimer with protein bS6 to the central domain of the 16S rRNA, where it helps stabilize the platform of the 30S subunit.</text>
</comment>
<comment type="subunit">
    <text evidence="1">Part of the 30S ribosomal subunit. Forms a tight heterodimer with protein bS6.</text>
</comment>
<comment type="similarity">
    <text evidence="1">Belongs to the bacterial ribosomal protein bS18 family.</text>
</comment>
<sequence length="82" mass="9590">MVDINQIPTRRPFHRRRKTCPFSGANAPKIDYKDVKLLQRYISERGKIVPSRITAVSQKKQRELARAIKRARFLGLLPYVVK</sequence>
<name>RS18_CHESB</name>
<dbReference type="EMBL" id="CP000390">
    <property type="protein sequence ID" value="ABG63310.1"/>
    <property type="molecule type" value="Genomic_DNA"/>
</dbReference>
<dbReference type="SMR" id="Q11H15"/>
<dbReference type="STRING" id="266779.Meso_1917"/>
<dbReference type="KEGG" id="mes:Meso_1917"/>
<dbReference type="eggNOG" id="COG0238">
    <property type="taxonomic scope" value="Bacteria"/>
</dbReference>
<dbReference type="HOGENOM" id="CLU_148710_2_2_5"/>
<dbReference type="OrthoDB" id="9812008at2"/>
<dbReference type="GO" id="GO:0022627">
    <property type="term" value="C:cytosolic small ribosomal subunit"/>
    <property type="evidence" value="ECO:0007669"/>
    <property type="project" value="TreeGrafter"/>
</dbReference>
<dbReference type="GO" id="GO:0070181">
    <property type="term" value="F:small ribosomal subunit rRNA binding"/>
    <property type="evidence" value="ECO:0007669"/>
    <property type="project" value="TreeGrafter"/>
</dbReference>
<dbReference type="GO" id="GO:0003735">
    <property type="term" value="F:structural constituent of ribosome"/>
    <property type="evidence" value="ECO:0007669"/>
    <property type="project" value="InterPro"/>
</dbReference>
<dbReference type="GO" id="GO:0006412">
    <property type="term" value="P:translation"/>
    <property type="evidence" value="ECO:0007669"/>
    <property type="project" value="UniProtKB-UniRule"/>
</dbReference>
<dbReference type="Gene3D" id="4.10.640.10">
    <property type="entry name" value="Ribosomal protein S18"/>
    <property type="match status" value="1"/>
</dbReference>
<dbReference type="HAMAP" id="MF_00270">
    <property type="entry name" value="Ribosomal_bS18"/>
    <property type="match status" value="1"/>
</dbReference>
<dbReference type="InterPro" id="IPR001648">
    <property type="entry name" value="Ribosomal_bS18"/>
</dbReference>
<dbReference type="InterPro" id="IPR018275">
    <property type="entry name" value="Ribosomal_bS18_CS"/>
</dbReference>
<dbReference type="InterPro" id="IPR036870">
    <property type="entry name" value="Ribosomal_bS18_sf"/>
</dbReference>
<dbReference type="NCBIfam" id="TIGR00165">
    <property type="entry name" value="S18"/>
    <property type="match status" value="1"/>
</dbReference>
<dbReference type="PANTHER" id="PTHR13479">
    <property type="entry name" value="30S RIBOSOMAL PROTEIN S18"/>
    <property type="match status" value="1"/>
</dbReference>
<dbReference type="PANTHER" id="PTHR13479:SF40">
    <property type="entry name" value="SMALL RIBOSOMAL SUBUNIT PROTEIN BS18M"/>
    <property type="match status" value="1"/>
</dbReference>
<dbReference type="Pfam" id="PF01084">
    <property type="entry name" value="Ribosomal_S18"/>
    <property type="match status" value="1"/>
</dbReference>
<dbReference type="PRINTS" id="PR00974">
    <property type="entry name" value="RIBOSOMALS18"/>
</dbReference>
<dbReference type="SUPFAM" id="SSF46911">
    <property type="entry name" value="Ribosomal protein S18"/>
    <property type="match status" value="1"/>
</dbReference>
<dbReference type="PROSITE" id="PS00057">
    <property type="entry name" value="RIBOSOMAL_S18"/>
    <property type="match status" value="1"/>
</dbReference>
<protein>
    <recommendedName>
        <fullName evidence="1">Small ribosomal subunit protein bS18</fullName>
    </recommendedName>
    <alternativeName>
        <fullName evidence="3">30S ribosomal protein S18</fullName>
    </alternativeName>
</protein>
<keyword id="KW-0687">Ribonucleoprotein</keyword>
<keyword id="KW-0689">Ribosomal protein</keyword>
<keyword id="KW-0694">RNA-binding</keyword>
<keyword id="KW-0699">rRNA-binding</keyword>
<feature type="chain" id="PRO_1000003533" description="Small ribosomal subunit protein bS18">
    <location>
        <begin position="1"/>
        <end position="82"/>
    </location>
</feature>
<feature type="region of interest" description="Disordered" evidence="2">
    <location>
        <begin position="1"/>
        <end position="20"/>
    </location>
</feature>
<organism>
    <name type="scientific">Chelativorans sp. (strain BNC1)</name>
    <dbReference type="NCBI Taxonomy" id="266779"/>
    <lineage>
        <taxon>Bacteria</taxon>
        <taxon>Pseudomonadati</taxon>
        <taxon>Pseudomonadota</taxon>
        <taxon>Alphaproteobacteria</taxon>
        <taxon>Hyphomicrobiales</taxon>
        <taxon>Phyllobacteriaceae</taxon>
        <taxon>Chelativorans</taxon>
    </lineage>
</organism>
<proteinExistence type="inferred from homology"/>
<gene>
    <name evidence="1" type="primary">rpsR</name>
    <name type="ordered locus">Meso_1917</name>
</gene>